<accession>Q8K5C0</accession>
<accession>Q80UZ5</accession>
<sequence>MSQESDNNKRLVALVPMPSDPPFNTRRAYTSEDEAWKSYLENPLTAATKAMMSINGDEDSAAALGLLYDYYKVPRDKRLLSVSKASDSQEDQDKRNCLGTSEAQINLSGGENRVQVLKTVPVNLCLSQDHMENSKREQYSVSITESSAVIPVSGITVVKAEDFTPVFMAPPVHYPRADSEEQRVVIFEQTQYDLPSIASHSSYLKDDQRSTPDSTYSESFKDGASEKFRSTSVGADEYTYDQTGSGTFQYTLEATKSLRQKQGEGPMTYLNKGQFYAITLSETGDNKCFRHPISKVRSVVMVVFSEDKNRDEQLKYWKYWHSRQHTAKQRVLDIADYKESFNTIGNIEEIAYNAVSFTWDVNEEAKIFITVNCLSTDFSSQKGVKGLPLMIQIDTYSYNNRSNKPIHRAYCQIKVFCDKGAERKIRDEERKQNRKKGKGQASQAQCNNSSDGKMAAIPLQKKSDITYFKTMPDLHSQPVLFIPDVHFANLQRTGQVYYNTDDEREGSSVLVKRMFRPMEEEFGPTPSKQIKEENVKRVLLYVRKENDDVFDALMLKSPTVKGLMEALSEKYGLPVEKITKLYKKSKKGILVNMDDNIIEHYSNEDTFILNMESMVEGFKITLMEI</sequence>
<organism>
    <name type="scientific">Mus musculus</name>
    <name type="common">Mouse</name>
    <dbReference type="NCBI Taxonomy" id="10090"/>
    <lineage>
        <taxon>Eukaryota</taxon>
        <taxon>Metazoa</taxon>
        <taxon>Chordata</taxon>
        <taxon>Craniata</taxon>
        <taxon>Vertebrata</taxon>
        <taxon>Euteleostomi</taxon>
        <taxon>Mammalia</taxon>
        <taxon>Eutheria</taxon>
        <taxon>Euarchontoglires</taxon>
        <taxon>Glires</taxon>
        <taxon>Rodentia</taxon>
        <taxon>Myomorpha</taxon>
        <taxon>Muroidea</taxon>
        <taxon>Muridae</taxon>
        <taxon>Murinae</taxon>
        <taxon>Mus</taxon>
        <taxon>Mus</taxon>
    </lineage>
</organism>
<keyword id="KW-0010">Activator</keyword>
<keyword id="KW-0238">DNA-binding</keyword>
<keyword id="KW-0472">Membrane</keyword>
<keyword id="KW-0539">Nucleus</keyword>
<keyword id="KW-1185">Reference proteome</keyword>
<keyword id="KW-0804">Transcription</keyword>
<keyword id="KW-0805">Transcription regulation</keyword>
<feature type="chain" id="PRO_0000227995" description="Grainyhead-like protein 2 homolog">
    <location>
        <begin position="1"/>
        <end position="625"/>
    </location>
</feature>
<feature type="domain" description="Grh/CP2 DB" evidence="2">
    <location>
        <begin position="244"/>
        <end position="482"/>
    </location>
</feature>
<feature type="region of interest" description="Transcription activation" evidence="7">
    <location>
        <begin position="1"/>
        <end position="93"/>
    </location>
</feature>
<feature type="region of interest" description="Disordered" evidence="3">
    <location>
        <begin position="198"/>
        <end position="222"/>
    </location>
</feature>
<feature type="region of interest" description="Disordered" evidence="3">
    <location>
        <begin position="428"/>
        <end position="452"/>
    </location>
</feature>
<feature type="compositionally biased region" description="Polar residues" evidence="3">
    <location>
        <begin position="440"/>
        <end position="451"/>
    </location>
</feature>
<feature type="site" description="Important for activation of transcription" evidence="1">
    <location>
        <position position="423"/>
    </location>
</feature>
<dbReference type="EMBL" id="AF411213">
    <property type="protein sequence ID" value="AAM22619.1"/>
    <property type="molecule type" value="mRNA"/>
</dbReference>
<dbReference type="EMBL" id="BC042575">
    <property type="protein sequence ID" value="AAH42575.1"/>
    <property type="molecule type" value="mRNA"/>
</dbReference>
<dbReference type="EMBL" id="BC055035">
    <property type="protein sequence ID" value="AAH55035.1"/>
    <property type="molecule type" value="mRNA"/>
</dbReference>
<dbReference type="CCDS" id="CCDS27434.1"/>
<dbReference type="RefSeq" id="NP_080772.2">
    <property type="nucleotide sequence ID" value="NM_026496.4"/>
</dbReference>
<dbReference type="SMR" id="Q8K5C0"/>
<dbReference type="BioGRID" id="232985">
    <property type="interactions" value="5"/>
</dbReference>
<dbReference type="FunCoup" id="Q8K5C0">
    <property type="interactions" value="881"/>
</dbReference>
<dbReference type="IntAct" id="Q8K5C0">
    <property type="interactions" value="3"/>
</dbReference>
<dbReference type="MINT" id="Q8K5C0"/>
<dbReference type="STRING" id="10090.ENSMUSP00000022895"/>
<dbReference type="GlyGen" id="Q8K5C0">
    <property type="glycosylation" value="3 sites, 1 O-linked glycan (2 sites)"/>
</dbReference>
<dbReference type="iPTMnet" id="Q8K5C0"/>
<dbReference type="PhosphoSitePlus" id="Q8K5C0"/>
<dbReference type="PaxDb" id="10090-ENSMUSP00000022895"/>
<dbReference type="PeptideAtlas" id="Q8K5C0"/>
<dbReference type="ProteomicsDB" id="271297"/>
<dbReference type="Antibodypedia" id="1306">
    <property type="antibodies" value="154 antibodies from 22 providers"/>
</dbReference>
<dbReference type="DNASU" id="252973"/>
<dbReference type="Ensembl" id="ENSMUST00000022895.15">
    <property type="protein sequence ID" value="ENSMUSP00000022895.9"/>
    <property type="gene ID" value="ENSMUSG00000022286.17"/>
</dbReference>
<dbReference type="GeneID" id="252973"/>
<dbReference type="KEGG" id="mmu:252973"/>
<dbReference type="UCSC" id="uc007vne.2">
    <property type="organism name" value="mouse"/>
</dbReference>
<dbReference type="AGR" id="MGI:2182543"/>
<dbReference type="CTD" id="79977"/>
<dbReference type="MGI" id="MGI:2182543">
    <property type="gene designation" value="Grhl2"/>
</dbReference>
<dbReference type="VEuPathDB" id="HostDB:ENSMUSG00000022286"/>
<dbReference type="eggNOG" id="KOG4091">
    <property type="taxonomic scope" value="Eukaryota"/>
</dbReference>
<dbReference type="GeneTree" id="ENSGT00940000155788"/>
<dbReference type="HOGENOM" id="CLU_021156_1_1_1"/>
<dbReference type="InParanoid" id="Q8K5C0"/>
<dbReference type="OMA" id="QAAQTQC"/>
<dbReference type="OrthoDB" id="7680836at2759"/>
<dbReference type="PhylomeDB" id="Q8K5C0"/>
<dbReference type="TreeFam" id="TF314132"/>
<dbReference type="BioGRID-ORCS" id="252973">
    <property type="hits" value="1 hit in 78 CRISPR screens"/>
</dbReference>
<dbReference type="ChiTaRS" id="Grhl2">
    <property type="organism name" value="mouse"/>
</dbReference>
<dbReference type="PRO" id="PR:Q8K5C0"/>
<dbReference type="Proteomes" id="UP000000589">
    <property type="component" value="Chromosome 15"/>
</dbReference>
<dbReference type="RNAct" id="Q8K5C0">
    <property type="molecule type" value="protein"/>
</dbReference>
<dbReference type="Bgee" id="ENSMUSG00000022286">
    <property type="expression patterns" value="Expressed in lacrimal gland and 206 other cell types or tissues"/>
</dbReference>
<dbReference type="ExpressionAtlas" id="Q8K5C0">
    <property type="expression patterns" value="baseline and differential"/>
</dbReference>
<dbReference type="GO" id="GO:0005911">
    <property type="term" value="C:cell-cell junction"/>
    <property type="evidence" value="ECO:0000250"/>
    <property type="project" value="UniProtKB"/>
</dbReference>
<dbReference type="GO" id="GO:0016020">
    <property type="term" value="C:membrane"/>
    <property type="evidence" value="ECO:0007669"/>
    <property type="project" value="UniProtKB-SubCell"/>
</dbReference>
<dbReference type="GO" id="GO:0005654">
    <property type="term" value="C:nucleoplasm"/>
    <property type="evidence" value="ECO:0007669"/>
    <property type="project" value="Ensembl"/>
</dbReference>
<dbReference type="GO" id="GO:0005634">
    <property type="term" value="C:nucleus"/>
    <property type="evidence" value="ECO:0000314"/>
    <property type="project" value="UniProtKB"/>
</dbReference>
<dbReference type="GO" id="GO:0003682">
    <property type="term" value="F:chromatin binding"/>
    <property type="evidence" value="ECO:0000314"/>
    <property type="project" value="MGI"/>
</dbReference>
<dbReference type="GO" id="GO:0031490">
    <property type="term" value="F:chromatin DNA binding"/>
    <property type="evidence" value="ECO:0000250"/>
    <property type="project" value="UniProtKB"/>
</dbReference>
<dbReference type="GO" id="GO:0003677">
    <property type="term" value="F:DNA binding"/>
    <property type="evidence" value="ECO:0000247"/>
    <property type="project" value="MGI"/>
</dbReference>
<dbReference type="GO" id="GO:0001228">
    <property type="term" value="F:DNA-binding transcription activator activity, RNA polymerase II-specific"/>
    <property type="evidence" value="ECO:0000250"/>
    <property type="project" value="UniProtKB"/>
</dbReference>
<dbReference type="GO" id="GO:0003700">
    <property type="term" value="F:DNA-binding transcription factor activity"/>
    <property type="evidence" value="ECO:0000314"/>
    <property type="project" value="UniProtKB"/>
</dbReference>
<dbReference type="GO" id="GO:0140297">
    <property type="term" value="F:DNA-binding transcription factor binding"/>
    <property type="evidence" value="ECO:0007669"/>
    <property type="project" value="Ensembl"/>
</dbReference>
<dbReference type="GO" id="GO:0042802">
    <property type="term" value="F:identical protein binding"/>
    <property type="evidence" value="ECO:0007669"/>
    <property type="project" value="Ensembl"/>
</dbReference>
<dbReference type="GO" id="GO:0001161">
    <property type="term" value="F:intronic transcription regulatory region sequence-specific DNA binding"/>
    <property type="evidence" value="ECO:0000314"/>
    <property type="project" value="UniProtKB"/>
</dbReference>
<dbReference type="GO" id="GO:0043565">
    <property type="term" value="F:sequence-specific DNA binding"/>
    <property type="evidence" value="ECO:0000314"/>
    <property type="project" value="UniProtKB"/>
</dbReference>
<dbReference type="GO" id="GO:0061713">
    <property type="term" value="P:anterior neural tube closure"/>
    <property type="evidence" value="ECO:0000315"/>
    <property type="project" value="MGI"/>
</dbReference>
<dbReference type="GO" id="GO:0070830">
    <property type="term" value="P:bicellular tight junction assembly"/>
    <property type="evidence" value="ECO:0000250"/>
    <property type="project" value="UniProtKB"/>
</dbReference>
<dbReference type="GO" id="GO:0007420">
    <property type="term" value="P:brain development"/>
    <property type="evidence" value="ECO:0000315"/>
    <property type="project" value="MGI"/>
</dbReference>
<dbReference type="GO" id="GO:0043010">
    <property type="term" value="P:camera-type eye development"/>
    <property type="evidence" value="ECO:0000315"/>
    <property type="project" value="MGI"/>
</dbReference>
<dbReference type="GO" id="GO:0003208">
    <property type="term" value="P:cardiac ventricle morphogenesis"/>
    <property type="evidence" value="ECO:0000315"/>
    <property type="project" value="MGI"/>
</dbReference>
<dbReference type="GO" id="GO:0007155">
    <property type="term" value="P:cell adhesion"/>
    <property type="evidence" value="ECO:0000250"/>
    <property type="project" value="UniProtKB"/>
</dbReference>
<dbReference type="GO" id="GO:0034329">
    <property type="term" value="P:cell junction assembly"/>
    <property type="evidence" value="ECO:0000250"/>
    <property type="project" value="UniProtKB"/>
</dbReference>
<dbReference type="GO" id="GO:0048701">
    <property type="term" value="P:embryonic cranial skeleton morphogenesis"/>
    <property type="evidence" value="ECO:0000315"/>
    <property type="project" value="MGI"/>
</dbReference>
<dbReference type="GO" id="GO:0042733">
    <property type="term" value="P:embryonic digit morphogenesis"/>
    <property type="evidence" value="ECO:0000315"/>
    <property type="project" value="MGI"/>
</dbReference>
<dbReference type="GO" id="GO:0048568">
    <property type="term" value="P:embryonic organ development"/>
    <property type="evidence" value="ECO:0000315"/>
    <property type="project" value="MGI"/>
</dbReference>
<dbReference type="GO" id="GO:0008544">
    <property type="term" value="P:epidermis development"/>
    <property type="evidence" value="ECO:0000315"/>
    <property type="project" value="UniProtKB"/>
</dbReference>
<dbReference type="GO" id="GO:0003382">
    <property type="term" value="P:epithelial cell morphogenesis"/>
    <property type="evidence" value="ECO:0000315"/>
    <property type="project" value="UniProtKB"/>
</dbReference>
<dbReference type="GO" id="GO:0060672">
    <property type="term" value="P:epithelial cell morphogenesis involved in placental branching"/>
    <property type="evidence" value="ECO:0000315"/>
    <property type="project" value="MGI"/>
</dbReference>
<dbReference type="GO" id="GO:0090132">
    <property type="term" value="P:epithelium migration"/>
    <property type="evidence" value="ECO:0000315"/>
    <property type="project" value="UniProtKB"/>
</dbReference>
<dbReference type="GO" id="GO:0060324">
    <property type="term" value="P:face development"/>
    <property type="evidence" value="ECO:0000315"/>
    <property type="project" value="MGI"/>
</dbReference>
<dbReference type="GO" id="GO:0001701">
    <property type="term" value="P:in utero embryonic development"/>
    <property type="evidence" value="ECO:0000315"/>
    <property type="project" value="MGI"/>
</dbReference>
<dbReference type="GO" id="GO:0030216">
    <property type="term" value="P:keratinocyte differentiation"/>
    <property type="evidence" value="ECO:0000250"/>
    <property type="project" value="UniProtKB"/>
</dbReference>
<dbReference type="GO" id="GO:0060487">
    <property type="term" value="P:lung epithelial cell differentiation"/>
    <property type="evidence" value="ECO:0000315"/>
    <property type="project" value="UniProtKB"/>
</dbReference>
<dbReference type="GO" id="GO:0060463">
    <property type="term" value="P:lung lobe morphogenesis"/>
    <property type="evidence" value="ECO:0000315"/>
    <property type="project" value="MGI"/>
</dbReference>
<dbReference type="GO" id="GO:0035264">
    <property type="term" value="P:multicellular organism growth"/>
    <property type="evidence" value="ECO:0000315"/>
    <property type="project" value="MGI"/>
</dbReference>
<dbReference type="GO" id="GO:0001843">
    <property type="term" value="P:neural tube closure"/>
    <property type="evidence" value="ECO:0000315"/>
    <property type="project" value="UniProtKB"/>
</dbReference>
<dbReference type="GO" id="GO:0021915">
    <property type="term" value="P:neural tube development"/>
    <property type="evidence" value="ECO:0000315"/>
    <property type="project" value="MGI"/>
</dbReference>
<dbReference type="GO" id="GO:0045893">
    <property type="term" value="P:positive regulation of DNA-templated transcription"/>
    <property type="evidence" value="ECO:0000315"/>
    <property type="project" value="CACAO"/>
</dbReference>
<dbReference type="GO" id="GO:0045944">
    <property type="term" value="P:positive regulation of transcription by RNA polymerase II"/>
    <property type="evidence" value="ECO:0000314"/>
    <property type="project" value="UniProtKB"/>
</dbReference>
<dbReference type="GO" id="GO:0006355">
    <property type="term" value="P:regulation of DNA-templated transcription"/>
    <property type="evidence" value="ECO:0000247"/>
    <property type="project" value="MGI"/>
</dbReference>
<dbReference type="GO" id="GO:0010468">
    <property type="term" value="P:regulation of gene expression"/>
    <property type="evidence" value="ECO:0000315"/>
    <property type="project" value="MGI"/>
</dbReference>
<dbReference type="GO" id="GO:0006357">
    <property type="term" value="P:regulation of transcription by RNA polymerase II"/>
    <property type="evidence" value="ECO:0000250"/>
    <property type="project" value="UniProtKB"/>
</dbReference>
<dbReference type="GO" id="GO:0030323">
    <property type="term" value="P:respiratory tube development"/>
    <property type="evidence" value="ECO:0000315"/>
    <property type="project" value="MGI"/>
</dbReference>
<dbReference type="InterPro" id="IPR007604">
    <property type="entry name" value="CP2"/>
</dbReference>
<dbReference type="InterPro" id="IPR040167">
    <property type="entry name" value="TF_CP2-like"/>
</dbReference>
<dbReference type="PANTHER" id="PTHR11037:SF17">
    <property type="entry name" value="GRAINYHEAD-LIKE PROTEIN 2 HOMOLOG"/>
    <property type="match status" value="1"/>
</dbReference>
<dbReference type="PANTHER" id="PTHR11037">
    <property type="entry name" value="TRANSCRIPTION FACTOR CP2"/>
    <property type="match status" value="1"/>
</dbReference>
<dbReference type="Pfam" id="PF04516">
    <property type="entry name" value="CP2"/>
    <property type="match status" value="1"/>
</dbReference>
<dbReference type="Pfam" id="PF25416">
    <property type="entry name" value="GRHL1_C"/>
    <property type="match status" value="1"/>
</dbReference>
<dbReference type="PROSITE" id="PS51968">
    <property type="entry name" value="GRH_CP2_DB"/>
    <property type="match status" value="1"/>
</dbReference>
<proteinExistence type="evidence at transcript level"/>
<comment type="function">
    <text evidence="1 6 7 8 9 10">Transcription factor playing an important role in primary neurulation and in epithelial development. Binds directly to the consensus DNA sequence 5'-AACCGGTT-3' acting as an activator and repressor on distinct target genes (PubMed:22696678). During embryogenesis, plays unique and cooperative roles with GRHL3 in establishing distinct zones of primary neurulation. Essential for closure 3 (rostral end of the forebrain), functions cooperatively with GRHL3 in closure 2 (forebrain/midbrain boundary) and posterior neuropore closure (PubMed:20654612). Regulates epithelial morphogenesis acting as a target gene-associated transcriptional activator of apical junctional complex components. Up-regulates of CLDN3 and CLDN4, as well as of RAB25, which increases the CLDN4 protein and its localization at tight junctions (PubMed:22696678). Comprises an essential component of the transcriptional machinery that establishes appropriate expression levels of CLDN4 and CDH1 in different types of epithelia (PubMed:20978075). Exhibits functional redundancy with GRHL3 in epidermal morphogenetic events such as eyelid fusion and epidermal wound repair (PubMed:21081122). In lung, forms a regulatory loop with NKX2-1 that coordinates lung epithelial cell morphogenesis and differentiation (PubMed:22955271). In keratinocytes, plays a role in telomerase activation during cellular proliferation, regulates TERT expression by binding to TERT promoter region and inhibiting DNA methylation at the 5'-CpG island, possibly by interfering with DNMT1 enzyme activity. In addition, impairs keratinocyte differentiation and epidermal function by inhibiting the expression of genes clustered at the epidermal differentiation complex (EDC) as well as GRHL1 and GRHL3 through epigenetic mechanisms (By similarity).</text>
</comment>
<comment type="subunit">
    <text evidence="1">Homodimer, also forms heterodimers with GRHL1 or GRHL3.</text>
</comment>
<comment type="subcellular location">
    <subcellularLocation>
        <location evidence="7 9">Nucleus</location>
    </subcellularLocation>
    <subcellularLocation>
        <location evidence="1">Membrane</location>
    </subcellularLocation>
    <text evidence="1">detected at cell-cell contact areas.</text>
</comment>
<comment type="developmental stage">
    <text evidence="4 5 6 7 9 10">At 14.5 dpc expressed in lung, esophagus, skin and kidney. At 9.5 dpc expressed in foregut and surface ectoderm but not in the neural tube. At 9.5 dpc and 15.5 dpc, detected in the lung epithelium and in branchiolar and alveolar epithelial cells at 18.5 dpc and adult. Expressed in otocyst at 11.5 dpc, prominent in epithelial derivatives of the otic placode in the vestibule and cochlear duct at 18.5 dpc. At postnatal day 5, epithelial cells of the cochlear duct, which surround the endolymph-containing scala media, continued to express low levels, while little or no expression was seen in the mesenchyme-derived cells lining the scala tympani and scala vestibuli. Detected in cholangiocytes in postnatal day 1 and postnatal day 8 livers.</text>
</comment>
<comment type="disruption phenotype">
    <text evidence="6 7">Mutant embryos show an epithelial and anterior and posterior neural tube defects leading to death at around 11.5 dpc (PubMed:20654612, PubMed:20978075). They exhibit a fully penetrant split-face malformation, associated with cranioschisis. Closure of the remainder of the neural tube ocrurred normally with the exception of the posterior neuropore. The dorso-lateral hinge points fail to form and closure do not proceed beyond this point (PubMed:20654612).</text>
</comment>
<comment type="miscellaneous">
    <text evidence="12">GRHL genes (GRHL1, GRHL2 and GRHL3) show a paradoxal lack of redundancy despite their extensive sequence identity in the DNA-binding and protein dimerization domains and the fact that the core consensus DNA binding sites are identical. They have related but remarkably different functions during embryogenesis because of their differential spatiotemporal expression patterns during development.</text>
</comment>
<comment type="similarity">
    <text evidence="11">Belongs to the grh/CP2 family. Grainyhead subfamily.</text>
</comment>
<reference key="1">
    <citation type="journal article" date="2002" name="Mech. Dev.">
        <title>A highly conserved novel family of mammalian developmental transcription factors related to Drosophila grainyhead.</title>
        <authorList>
            <person name="Wilanowski T."/>
            <person name="Tuckfield A."/>
            <person name="Cerruti L."/>
            <person name="O'Connell S."/>
            <person name="Saint R."/>
            <person name="Parekh V."/>
            <person name="Tao J."/>
            <person name="Cunningham J.M."/>
            <person name="Jane S.M."/>
        </authorList>
    </citation>
    <scope>NUCLEOTIDE SEQUENCE [MRNA]</scope>
    <scope>DEVELOPMENTAL STAGE</scope>
    <source>
        <tissue>Teratocarcinoma</tissue>
    </source>
</reference>
<reference key="2">
    <citation type="journal article" date="2004" name="Genome Res.">
        <title>The status, quality, and expansion of the NIH full-length cDNA project: the Mammalian Gene Collection (MGC).</title>
        <authorList>
            <consortium name="The MGC Project Team"/>
        </authorList>
    </citation>
    <scope>NUCLEOTIDE SEQUENCE [LARGE SCALE MRNA]</scope>
    <source>
        <strain>Czech II</strain>
        <tissue>Mammary tumor</tissue>
        <tissue>Olfactory epithelium</tissue>
    </source>
</reference>
<reference key="3">
    <citation type="journal article" date="2002" name="Hum. Mol. Genet.">
        <title>Mutation of a transcription factor, TFCP2L3, causes progressive autosomal dominant hearing loss, DFNA28.</title>
        <authorList>
            <person name="Peters L.M."/>
            <person name="Anderson D.W."/>
            <person name="Griffith A.J."/>
            <person name="Grundfast K.M."/>
            <person name="San Agustin T.B."/>
            <person name="Madeo A.C."/>
            <person name="Friedman T.B."/>
            <person name="Morell R.J."/>
        </authorList>
    </citation>
    <scope>DEVELOPMENTAL STAGE</scope>
</reference>
<reference key="4">
    <citation type="journal article" date="2010" name="Development">
        <title>The transcription factor grainyhead-like 2 regulates the molecular composition of the epithelial apical junctional complex.</title>
        <authorList>
            <person name="Werth M."/>
            <person name="Walentin K."/>
            <person name="Aue A."/>
            <person name="Schonheit J."/>
            <person name="Wuebken A."/>
            <person name="Pode-Shakked N."/>
            <person name="Vilianovitch L."/>
            <person name="Erdmann B."/>
            <person name="Dekel B."/>
            <person name="Bader M."/>
            <person name="Barasch J."/>
            <person name="Rosenbauer F."/>
            <person name="Luft F.C."/>
            <person name="Schmidt-Ott K.M."/>
        </authorList>
    </citation>
    <scope>FUNCTION</scope>
    <scope>DISRUPTION PHENOTYPE</scope>
    <scope>DEVELOPMENTAL STAGE</scope>
    <scope>SUBCELLULAR LOCATION</scope>
</reference>
<reference key="5">
    <citation type="journal article" date="2010" name="Dev. Biol.">
        <title>Regional neural tube closure defined by the Grainy head-like transcription factors.</title>
        <authorList>
            <person name="Rifat Y."/>
            <person name="Parekh V."/>
            <person name="Wilanowski T."/>
            <person name="Hislop N.R."/>
            <person name="Auden A."/>
            <person name="Ting S.B."/>
            <person name="Cunningham J.M."/>
            <person name="Jane S.M."/>
        </authorList>
    </citation>
    <scope>FUNCTION</scope>
    <scope>DISRUPTION PHENOTYPE</scope>
    <scope>DEVELOPMENTAL STAGE</scope>
</reference>
<reference key="6">
    <citation type="journal article" date="2011" name="Dev. Biol.">
        <title>The unique and cooperative roles of the Grainy head-like transcription factors in epidermal development reflect unexpected target gene specificity.</title>
        <authorList>
            <person name="Boglev Y."/>
            <person name="Wilanowski T."/>
            <person name="Caddy J."/>
            <person name="Parekh V."/>
            <person name="Auden A."/>
            <person name="Darido C."/>
            <person name="Hislop N.R."/>
            <person name="Cangkrama M."/>
            <person name="Ting S.B."/>
            <person name="Jane S.M."/>
        </authorList>
    </citation>
    <scope>FUNCTION</scope>
</reference>
<reference key="7">
    <citation type="journal article" date="2012" name="J. Biol. Chem.">
        <title>The transcription factors Grainyhead-like 2 and NK2-homeobox 1 form a regulatory loop that coordinates lung epithelial cell morphogenesis and differentiation.</title>
        <authorList>
            <person name="Varma S."/>
            <person name="Cao Y."/>
            <person name="Tagne J.B."/>
            <person name="Lakshminarayanan M."/>
            <person name="Li J."/>
            <person name="Friedman T.B."/>
            <person name="Morell R.J."/>
            <person name="Warburton D."/>
            <person name="Kotton D.N."/>
            <person name="Ramirez M.I."/>
        </authorList>
    </citation>
    <scope>FUNCTION</scope>
    <scope>DEVELOPMENTAL STAGE</scope>
</reference>
<reference key="8">
    <citation type="journal article" date="2012" name="Mol. Biol. Cell">
        <title>Grainyhead-like 2 regulates epithelial morphogenesis by establishing functional tight junctions through the organization of a molecular network among claudin3, claudin4, and Rab25.</title>
        <authorList>
            <person name="Senga K."/>
            <person name="Mostov K.E."/>
            <person name="Mitaka T."/>
            <person name="Miyajima A."/>
            <person name="Tanimizu N."/>
        </authorList>
    </citation>
    <scope>FUNCTION</scope>
    <scope>DEVELOPMENTAL STAGE</scope>
    <scope>SUBCELLULAR LOCATION</scope>
</reference>
<evidence type="ECO:0000250" key="1">
    <source>
        <dbReference type="UniProtKB" id="Q6ISB3"/>
    </source>
</evidence>
<evidence type="ECO:0000255" key="2">
    <source>
        <dbReference type="PROSITE-ProRule" id="PRU01313"/>
    </source>
</evidence>
<evidence type="ECO:0000256" key="3">
    <source>
        <dbReference type="SAM" id="MobiDB-lite"/>
    </source>
</evidence>
<evidence type="ECO:0000269" key="4">
    <source>
    </source>
</evidence>
<evidence type="ECO:0000269" key="5">
    <source>
    </source>
</evidence>
<evidence type="ECO:0000269" key="6">
    <source>
    </source>
</evidence>
<evidence type="ECO:0000269" key="7">
    <source>
    </source>
</evidence>
<evidence type="ECO:0000269" key="8">
    <source>
    </source>
</evidence>
<evidence type="ECO:0000269" key="9">
    <source>
    </source>
</evidence>
<evidence type="ECO:0000269" key="10">
    <source>
    </source>
</evidence>
<evidence type="ECO:0000305" key="11"/>
<evidence type="ECO:0000305" key="12">
    <source>
    </source>
</evidence>
<gene>
    <name type="primary">Grhl2</name>
    <name type="synonym">Bom</name>
    <name type="synonym">Tcfcp2l3</name>
</gene>
<protein>
    <recommendedName>
        <fullName>Grainyhead-like protein 2 homolog</fullName>
    </recommendedName>
    <alternativeName>
        <fullName>Brother of mammalian grainyhead</fullName>
    </alternativeName>
    <alternativeName>
        <fullName>Transcription factor CP2-like 3</fullName>
    </alternativeName>
</protein>
<name>GRHL2_MOUSE</name>